<organism>
    <name type="scientific">Shigella flexneri</name>
    <dbReference type="NCBI Taxonomy" id="623"/>
    <lineage>
        <taxon>Bacteria</taxon>
        <taxon>Pseudomonadati</taxon>
        <taxon>Pseudomonadota</taxon>
        <taxon>Gammaproteobacteria</taxon>
        <taxon>Enterobacterales</taxon>
        <taxon>Enterobacteriaceae</taxon>
        <taxon>Shigella</taxon>
    </lineage>
</organism>
<dbReference type="EC" id="3.5.1.108" evidence="1"/>
<dbReference type="EMBL" id="AE005674">
    <property type="protein sequence ID" value="AAN41758.1"/>
    <property type="molecule type" value="Genomic_DNA"/>
</dbReference>
<dbReference type="EMBL" id="AE014073">
    <property type="protein sequence ID" value="AAP15639.1"/>
    <property type="molecule type" value="Genomic_DNA"/>
</dbReference>
<dbReference type="RefSeq" id="NP_706051.1">
    <property type="nucleotide sequence ID" value="NC_004337.2"/>
</dbReference>
<dbReference type="RefSeq" id="WP_000595482.1">
    <property type="nucleotide sequence ID" value="NZ_WPGW01000007.1"/>
</dbReference>
<dbReference type="SMR" id="P0A728"/>
<dbReference type="STRING" id="198214.SF0093"/>
<dbReference type="PaxDb" id="198214-SF0093"/>
<dbReference type="GeneID" id="1025956"/>
<dbReference type="GeneID" id="93777338"/>
<dbReference type="KEGG" id="sfl:SF0093"/>
<dbReference type="KEGG" id="sfx:S0095"/>
<dbReference type="PATRIC" id="fig|198214.7.peg.108"/>
<dbReference type="HOGENOM" id="CLU_046528_1_0_6"/>
<dbReference type="UniPathway" id="UPA00359">
    <property type="reaction ID" value="UER00478"/>
</dbReference>
<dbReference type="Proteomes" id="UP000001006">
    <property type="component" value="Chromosome"/>
</dbReference>
<dbReference type="Proteomes" id="UP000002673">
    <property type="component" value="Chromosome"/>
</dbReference>
<dbReference type="GO" id="GO:0016020">
    <property type="term" value="C:membrane"/>
    <property type="evidence" value="ECO:0007669"/>
    <property type="project" value="GOC"/>
</dbReference>
<dbReference type="GO" id="GO:0046872">
    <property type="term" value="F:metal ion binding"/>
    <property type="evidence" value="ECO:0007669"/>
    <property type="project" value="UniProtKB-KW"/>
</dbReference>
<dbReference type="GO" id="GO:0103117">
    <property type="term" value="F:UDP-3-O-acyl-N-acetylglucosamine deacetylase activity"/>
    <property type="evidence" value="ECO:0007669"/>
    <property type="project" value="UniProtKB-UniRule"/>
</dbReference>
<dbReference type="GO" id="GO:0009245">
    <property type="term" value="P:lipid A biosynthetic process"/>
    <property type="evidence" value="ECO:0007669"/>
    <property type="project" value="UniProtKB-UniRule"/>
</dbReference>
<dbReference type="FunFam" id="3.30.1700.10:FF:000001">
    <property type="entry name" value="UDP-3-O-acyl-N-acetylglucosamine deacetylase"/>
    <property type="match status" value="1"/>
</dbReference>
<dbReference type="FunFam" id="3.30.230.20:FF:000001">
    <property type="entry name" value="UDP-3-O-acyl-N-acetylglucosamine deacetylase"/>
    <property type="match status" value="1"/>
</dbReference>
<dbReference type="Gene3D" id="3.30.230.20">
    <property type="entry name" value="lpxc deacetylase, domain 1"/>
    <property type="match status" value="1"/>
</dbReference>
<dbReference type="Gene3D" id="3.30.1700.10">
    <property type="entry name" value="lpxc deacetylase, domain 2"/>
    <property type="match status" value="1"/>
</dbReference>
<dbReference type="HAMAP" id="MF_00388">
    <property type="entry name" value="LpxC"/>
    <property type="match status" value="1"/>
</dbReference>
<dbReference type="InterPro" id="IPR020568">
    <property type="entry name" value="Ribosomal_Su5_D2-typ_SF"/>
</dbReference>
<dbReference type="InterPro" id="IPR004463">
    <property type="entry name" value="UDP-acyl_GlcNac_deAcase"/>
</dbReference>
<dbReference type="InterPro" id="IPR011334">
    <property type="entry name" value="UDP-acyl_GlcNac_deAcase_C"/>
</dbReference>
<dbReference type="InterPro" id="IPR015870">
    <property type="entry name" value="UDP-acyl_N-AcGlcN_deAcase_N"/>
</dbReference>
<dbReference type="NCBIfam" id="TIGR00325">
    <property type="entry name" value="lpxC"/>
    <property type="match status" value="1"/>
</dbReference>
<dbReference type="PANTHER" id="PTHR33694">
    <property type="entry name" value="UDP-3-O-ACYL-N-ACETYLGLUCOSAMINE DEACETYLASE 1, MITOCHONDRIAL-RELATED"/>
    <property type="match status" value="1"/>
</dbReference>
<dbReference type="PANTHER" id="PTHR33694:SF1">
    <property type="entry name" value="UDP-3-O-ACYL-N-ACETYLGLUCOSAMINE DEACETYLASE 1, MITOCHONDRIAL-RELATED"/>
    <property type="match status" value="1"/>
</dbReference>
<dbReference type="Pfam" id="PF03331">
    <property type="entry name" value="LpxC"/>
    <property type="match status" value="1"/>
</dbReference>
<dbReference type="SUPFAM" id="SSF54211">
    <property type="entry name" value="Ribosomal protein S5 domain 2-like"/>
    <property type="match status" value="2"/>
</dbReference>
<accession>P0A728</accession>
<accession>P07652</accession>
<reference key="1">
    <citation type="journal article" date="2002" name="Nucleic Acids Res.">
        <title>Genome sequence of Shigella flexneri 2a: insights into pathogenicity through comparison with genomes of Escherichia coli K12 and O157.</title>
        <authorList>
            <person name="Jin Q."/>
            <person name="Yuan Z."/>
            <person name="Xu J."/>
            <person name="Wang Y."/>
            <person name="Shen Y."/>
            <person name="Lu W."/>
            <person name="Wang J."/>
            <person name="Liu H."/>
            <person name="Yang J."/>
            <person name="Yang F."/>
            <person name="Zhang X."/>
            <person name="Zhang J."/>
            <person name="Yang G."/>
            <person name="Wu H."/>
            <person name="Qu D."/>
            <person name="Dong J."/>
            <person name="Sun L."/>
            <person name="Xue Y."/>
            <person name="Zhao A."/>
            <person name="Gao Y."/>
            <person name="Zhu J."/>
            <person name="Kan B."/>
            <person name="Ding K."/>
            <person name="Chen S."/>
            <person name="Cheng H."/>
            <person name="Yao Z."/>
            <person name="He B."/>
            <person name="Chen R."/>
            <person name="Ma D."/>
            <person name="Qiang B."/>
            <person name="Wen Y."/>
            <person name="Hou Y."/>
            <person name="Yu J."/>
        </authorList>
    </citation>
    <scope>NUCLEOTIDE SEQUENCE [LARGE SCALE GENOMIC DNA]</scope>
    <source>
        <strain>301 / Serotype 2a</strain>
    </source>
</reference>
<reference key="2">
    <citation type="journal article" date="2003" name="Infect. Immun.">
        <title>Complete genome sequence and comparative genomics of Shigella flexneri serotype 2a strain 2457T.</title>
        <authorList>
            <person name="Wei J."/>
            <person name="Goldberg M.B."/>
            <person name="Burland V."/>
            <person name="Venkatesan M.M."/>
            <person name="Deng W."/>
            <person name="Fournier G."/>
            <person name="Mayhew G.F."/>
            <person name="Plunkett G. III"/>
            <person name="Rose D.J."/>
            <person name="Darling A."/>
            <person name="Mau B."/>
            <person name="Perna N.T."/>
            <person name="Payne S.M."/>
            <person name="Runyen-Janecky L.J."/>
            <person name="Zhou S."/>
            <person name="Schwartz D.C."/>
            <person name="Blattner F.R."/>
        </authorList>
    </citation>
    <scope>NUCLEOTIDE SEQUENCE [LARGE SCALE GENOMIC DNA]</scope>
    <source>
        <strain>ATCC 700930 / 2457T / Serotype 2a</strain>
    </source>
</reference>
<comment type="function">
    <text evidence="1">Catalyzes the hydrolysis of UDP-3-O-myristoyl-N-acetylglucosamine to form UDP-3-O-myristoylglucosamine and acetate, the committed step in lipid A biosynthesis.</text>
</comment>
<comment type="catalytic activity">
    <reaction evidence="1">
        <text>a UDP-3-O-[(3R)-3-hydroxyacyl]-N-acetyl-alpha-D-glucosamine + H2O = a UDP-3-O-[(3R)-3-hydroxyacyl]-alpha-D-glucosamine + acetate</text>
        <dbReference type="Rhea" id="RHEA:67816"/>
        <dbReference type="ChEBI" id="CHEBI:15377"/>
        <dbReference type="ChEBI" id="CHEBI:30089"/>
        <dbReference type="ChEBI" id="CHEBI:137740"/>
        <dbReference type="ChEBI" id="CHEBI:173225"/>
        <dbReference type="EC" id="3.5.1.108"/>
    </reaction>
</comment>
<comment type="cofactor">
    <cofactor evidence="1">
        <name>Zn(2+)</name>
        <dbReference type="ChEBI" id="CHEBI:29105"/>
    </cofactor>
</comment>
<comment type="pathway">
    <text evidence="1">Glycolipid biosynthesis; lipid IV(A) biosynthesis; lipid IV(A) from (3R)-3-hydroxytetradecanoyl-[acyl-carrier-protein] and UDP-N-acetyl-alpha-D-glucosamine: step 2/6.</text>
</comment>
<comment type="similarity">
    <text evidence="1">Belongs to the LpxC family.</text>
</comment>
<keyword id="KW-0378">Hydrolase</keyword>
<keyword id="KW-0441">Lipid A biosynthesis</keyword>
<keyword id="KW-0444">Lipid biosynthesis</keyword>
<keyword id="KW-0443">Lipid metabolism</keyword>
<keyword id="KW-0479">Metal-binding</keyword>
<keyword id="KW-1185">Reference proteome</keyword>
<keyword id="KW-0862">Zinc</keyword>
<gene>
    <name evidence="1" type="primary">lpxC</name>
    <name type="ordered locus">SF0093</name>
    <name type="ordered locus">S0095</name>
</gene>
<evidence type="ECO:0000255" key="1">
    <source>
        <dbReference type="HAMAP-Rule" id="MF_00388"/>
    </source>
</evidence>
<name>LPXC_SHIFL</name>
<feature type="chain" id="PRO_0000191958" description="UDP-3-O-acyl-N-acetylglucosamine deacetylase">
    <location>
        <begin position="1"/>
        <end position="305"/>
    </location>
</feature>
<feature type="active site" description="Proton donor" evidence="1">
    <location>
        <position position="265"/>
    </location>
</feature>
<feature type="binding site" evidence="1">
    <location>
        <position position="79"/>
    </location>
    <ligand>
        <name>Zn(2+)</name>
        <dbReference type="ChEBI" id="CHEBI:29105"/>
    </ligand>
</feature>
<feature type="binding site" evidence="1">
    <location>
        <position position="238"/>
    </location>
    <ligand>
        <name>Zn(2+)</name>
        <dbReference type="ChEBI" id="CHEBI:29105"/>
    </ligand>
</feature>
<feature type="binding site" evidence="1">
    <location>
        <position position="242"/>
    </location>
    <ligand>
        <name>Zn(2+)</name>
        <dbReference type="ChEBI" id="CHEBI:29105"/>
    </ligand>
</feature>
<sequence>MIKQRTLKRIVQATGVGLHTGKKVTLTLRPAPANTGVIYRRTDLNPPVDFPADAKSVRDTMLCTCLVNEHDVRISTVEHLNAALAGLGIDNIVIEVNAPEIPIMDGSAAPFVYLLLDAGIDELNCAKKFVRIKETVRVEDGDKWAEFKPYNGFSLDFTIDFNHPAIDSSNQRYAMNFSADAFMRQISRARTFGFMRDIEYLQSRGLCLGGSFDCAIVVDDYRVLNEDGLRFEDEFVRHKMLDAIGDLFMCGHNIIGAFTAYKSGHALNNKLLQAVLAKQEAWEYVTFQDDAELPLAFKAPSAVLA</sequence>
<protein>
    <recommendedName>
        <fullName evidence="1">UDP-3-O-acyl-N-acetylglucosamine deacetylase</fullName>
        <shortName evidence="1">UDP-3-O-acyl-GlcNAc deacetylase</shortName>
        <ecNumber evidence="1">3.5.1.108</ecNumber>
    </recommendedName>
    <alternativeName>
        <fullName evidence="1">UDP-3-O-[R-3-hydroxymyristoyl]-N-acetylglucosamine deacetylase</fullName>
    </alternativeName>
</protein>
<proteinExistence type="inferred from homology"/>